<proteinExistence type="evidence at protein level"/>
<reference key="1">
    <citation type="journal article" date="1990" name="Genes Dev.">
        <title>Isolation of two developmentally regulated genes involved in spore wall maturation in Saccharomyces cerevisiae.</title>
        <authorList>
            <person name="Briza P."/>
            <person name="Breitenbach M."/>
            <person name="Ellinger A."/>
            <person name="Segall J."/>
        </authorList>
    </citation>
    <scope>NUCLEOTIDE SEQUENCE [GENOMIC DNA]</scope>
    <source>
        <strain>ATCC 204510 / AB320</strain>
    </source>
</reference>
<reference key="2">
    <citation type="journal article" date="1997" name="Nature">
        <title>The nucleotide sequence of Saccharomyces cerevisiae chromosome IV.</title>
        <authorList>
            <person name="Jacq C."/>
            <person name="Alt-Moerbe J."/>
            <person name="Andre B."/>
            <person name="Arnold W."/>
            <person name="Bahr A."/>
            <person name="Ballesta J.P.G."/>
            <person name="Bargues M."/>
            <person name="Baron L."/>
            <person name="Becker A."/>
            <person name="Biteau N."/>
            <person name="Bloecker H."/>
            <person name="Blugeon C."/>
            <person name="Boskovic J."/>
            <person name="Brandt P."/>
            <person name="Brueckner M."/>
            <person name="Buitrago M.J."/>
            <person name="Coster F."/>
            <person name="Delaveau T."/>
            <person name="del Rey F."/>
            <person name="Dujon B."/>
            <person name="Eide L.G."/>
            <person name="Garcia-Cantalejo J.M."/>
            <person name="Goffeau A."/>
            <person name="Gomez-Peris A."/>
            <person name="Granotier C."/>
            <person name="Hanemann V."/>
            <person name="Hankeln T."/>
            <person name="Hoheisel J.D."/>
            <person name="Jaeger W."/>
            <person name="Jimenez A."/>
            <person name="Jonniaux J.-L."/>
            <person name="Kraemer C."/>
            <person name="Kuester H."/>
            <person name="Laamanen P."/>
            <person name="Legros Y."/>
            <person name="Louis E.J."/>
            <person name="Moeller-Rieker S."/>
            <person name="Monnet A."/>
            <person name="Moro M."/>
            <person name="Mueller-Auer S."/>
            <person name="Nussbaumer B."/>
            <person name="Paricio N."/>
            <person name="Paulin L."/>
            <person name="Perea J."/>
            <person name="Perez-Alonso M."/>
            <person name="Perez-Ortin J.E."/>
            <person name="Pohl T.M."/>
            <person name="Prydz H."/>
            <person name="Purnelle B."/>
            <person name="Rasmussen S.W."/>
            <person name="Remacha M.A."/>
            <person name="Revuelta J.L."/>
            <person name="Rieger M."/>
            <person name="Salom D."/>
            <person name="Saluz H.P."/>
            <person name="Saiz J.E."/>
            <person name="Saren A.-M."/>
            <person name="Schaefer M."/>
            <person name="Scharfe M."/>
            <person name="Schmidt E.R."/>
            <person name="Schneider C."/>
            <person name="Scholler P."/>
            <person name="Schwarz S."/>
            <person name="Soler-Mira A."/>
            <person name="Urrestarazu L.A."/>
            <person name="Verhasselt P."/>
            <person name="Vissers S."/>
            <person name="Voet M."/>
            <person name="Volckaert G."/>
            <person name="Wagner G."/>
            <person name="Wambutt R."/>
            <person name="Wedler E."/>
            <person name="Wedler H."/>
            <person name="Woelfl S."/>
            <person name="Harris D.E."/>
            <person name="Bowman S."/>
            <person name="Brown D."/>
            <person name="Churcher C.M."/>
            <person name="Connor R."/>
            <person name="Dedman K."/>
            <person name="Gentles S."/>
            <person name="Hamlin N."/>
            <person name="Hunt S."/>
            <person name="Jones L."/>
            <person name="McDonald S."/>
            <person name="Murphy L.D."/>
            <person name="Niblett D."/>
            <person name="Odell C."/>
            <person name="Oliver K."/>
            <person name="Rajandream M.A."/>
            <person name="Richards C."/>
            <person name="Shore L."/>
            <person name="Walsh S.V."/>
            <person name="Barrell B.G."/>
            <person name="Dietrich F.S."/>
            <person name="Mulligan J.T."/>
            <person name="Allen E."/>
            <person name="Araujo R."/>
            <person name="Aviles E."/>
            <person name="Berno A."/>
            <person name="Carpenter J."/>
            <person name="Chen E."/>
            <person name="Cherry J.M."/>
            <person name="Chung E."/>
            <person name="Duncan M."/>
            <person name="Hunicke-Smith S."/>
            <person name="Hyman R.W."/>
            <person name="Komp C."/>
            <person name="Lashkari D."/>
            <person name="Lew H."/>
            <person name="Lin D."/>
            <person name="Mosedale D."/>
            <person name="Nakahara K."/>
            <person name="Namath A."/>
            <person name="Oefner P."/>
            <person name="Oh C."/>
            <person name="Petel F.X."/>
            <person name="Roberts D."/>
            <person name="Schramm S."/>
            <person name="Schroeder M."/>
            <person name="Shogren T."/>
            <person name="Shroff N."/>
            <person name="Winant A."/>
            <person name="Yelton M.A."/>
            <person name="Botstein D."/>
            <person name="Davis R.W."/>
            <person name="Johnston M."/>
            <person name="Andrews S."/>
            <person name="Brinkman R."/>
            <person name="Cooper J."/>
            <person name="Ding H."/>
            <person name="Du Z."/>
            <person name="Favello A."/>
            <person name="Fulton L."/>
            <person name="Gattung S."/>
            <person name="Greco T."/>
            <person name="Hallsworth K."/>
            <person name="Hawkins J."/>
            <person name="Hillier L.W."/>
            <person name="Jier M."/>
            <person name="Johnson D."/>
            <person name="Johnston L."/>
            <person name="Kirsten J."/>
            <person name="Kucaba T."/>
            <person name="Langston Y."/>
            <person name="Latreille P."/>
            <person name="Le T."/>
            <person name="Mardis E."/>
            <person name="Menezes S."/>
            <person name="Miller N."/>
            <person name="Nhan M."/>
            <person name="Pauley A."/>
            <person name="Peluso D."/>
            <person name="Rifkin L."/>
            <person name="Riles L."/>
            <person name="Taich A."/>
            <person name="Trevaskis E."/>
            <person name="Vignati D."/>
            <person name="Wilcox L."/>
            <person name="Wohldman P."/>
            <person name="Vaudin M."/>
            <person name="Wilson R."/>
            <person name="Waterston R."/>
            <person name="Albermann K."/>
            <person name="Hani J."/>
            <person name="Heumann K."/>
            <person name="Kleine K."/>
            <person name="Mewes H.-W."/>
            <person name="Zollner A."/>
            <person name="Zaccaria P."/>
        </authorList>
    </citation>
    <scope>NUCLEOTIDE SEQUENCE [LARGE SCALE GENOMIC DNA]</scope>
    <source>
        <strain>ATCC 204508 / S288c</strain>
    </source>
</reference>
<reference key="3">
    <citation type="journal article" date="2014" name="G3 (Bethesda)">
        <title>The reference genome sequence of Saccharomyces cerevisiae: Then and now.</title>
        <authorList>
            <person name="Engel S.R."/>
            <person name="Dietrich F.S."/>
            <person name="Fisk D.G."/>
            <person name="Binkley G."/>
            <person name="Balakrishnan R."/>
            <person name="Costanzo M.C."/>
            <person name="Dwight S.S."/>
            <person name="Hitz B.C."/>
            <person name="Karra K."/>
            <person name="Nash R.S."/>
            <person name="Weng S."/>
            <person name="Wong E.D."/>
            <person name="Lloyd P."/>
            <person name="Skrzypek M.S."/>
            <person name="Miyasato S.R."/>
            <person name="Simison M."/>
            <person name="Cherry J.M."/>
        </authorList>
    </citation>
    <scope>GENOME REANNOTATION</scope>
    <source>
        <strain>ATCC 204508 / S288c</strain>
    </source>
</reference>
<reference key="4">
    <citation type="journal article" date="1994" name="Proc. Natl. Acad. Sci. U.S.A.">
        <title>The sporulation-specific enzymes encoded by the DIT1 and DIT2 genes catalyze a two-step reaction leading to a soluble LL-dityrosine-containing precursor of the yeast spore wall.</title>
        <authorList>
            <person name="Briza P."/>
            <person name="Eckerstorfer M."/>
            <person name="Breitenbach M."/>
        </authorList>
    </citation>
    <scope>CHARACTERIZATION</scope>
</reference>
<comment type="function">
    <text>Involved in spore wall maturation. Thought to catalyze the oxidation of tyrosine residues in the formation of LL-dityrosine a precursor of the spore wall.</text>
</comment>
<comment type="cofactor">
    <cofactor evidence="1">
        <name>heme</name>
        <dbReference type="ChEBI" id="CHEBI:30413"/>
    </cofactor>
</comment>
<comment type="developmental stage">
    <text>Sporulation.</text>
</comment>
<comment type="similarity">
    <text evidence="2">Belongs to the cytochrome P450 family.</text>
</comment>
<name>CP56_YEAST</name>
<dbReference type="EC" id="1.14.14.-"/>
<dbReference type="EMBL" id="X55713">
    <property type="protein sequence ID" value="CAA39246.1"/>
    <property type="molecule type" value="Genomic_DNA"/>
</dbReference>
<dbReference type="EMBL" id="U32274">
    <property type="protein sequence ID" value="AAB64842.1"/>
    <property type="molecule type" value="Genomic_DNA"/>
</dbReference>
<dbReference type="EMBL" id="BK006938">
    <property type="protein sequence ID" value="DAA12244.1"/>
    <property type="molecule type" value="Genomic_DNA"/>
</dbReference>
<dbReference type="PIR" id="B36395">
    <property type="entry name" value="B36395"/>
</dbReference>
<dbReference type="RefSeq" id="NP_010690.1">
    <property type="nucleotide sequence ID" value="NM_001180710.1"/>
</dbReference>
<dbReference type="SMR" id="P21595"/>
<dbReference type="BioGRID" id="32462">
    <property type="interactions" value="171"/>
</dbReference>
<dbReference type="FunCoup" id="P21595">
    <property type="interactions" value="1802"/>
</dbReference>
<dbReference type="STRING" id="4932.YDR402C"/>
<dbReference type="PaxDb" id="4932-YDR402C"/>
<dbReference type="EnsemblFungi" id="YDR402C_mRNA">
    <property type="protein sequence ID" value="YDR402C"/>
    <property type="gene ID" value="YDR402C"/>
</dbReference>
<dbReference type="GeneID" id="852011"/>
<dbReference type="KEGG" id="sce:YDR402C"/>
<dbReference type="AGR" id="SGD:S000002810"/>
<dbReference type="SGD" id="S000002810">
    <property type="gene designation" value="DIT2"/>
</dbReference>
<dbReference type="VEuPathDB" id="FungiDB:YDR402C"/>
<dbReference type="eggNOG" id="KOG0157">
    <property type="taxonomic scope" value="Eukaryota"/>
</dbReference>
<dbReference type="GeneTree" id="ENSGT00940000167749"/>
<dbReference type="HOGENOM" id="CLU_031576_0_0_1"/>
<dbReference type="InParanoid" id="P21595"/>
<dbReference type="OMA" id="FFGSRWN"/>
<dbReference type="OrthoDB" id="1470350at2759"/>
<dbReference type="BioCyc" id="YEAST:G3O-29946-MONOMER"/>
<dbReference type="BioGRID-ORCS" id="852011">
    <property type="hits" value="0 hits in 10 CRISPR screens"/>
</dbReference>
<dbReference type="PRO" id="PR:P21595"/>
<dbReference type="Proteomes" id="UP000002311">
    <property type="component" value="Chromosome IV"/>
</dbReference>
<dbReference type="RNAct" id="P21595">
    <property type="molecule type" value="protein"/>
</dbReference>
<dbReference type="GO" id="GO:0005783">
    <property type="term" value="C:endoplasmic reticulum"/>
    <property type="evidence" value="ECO:0000314"/>
    <property type="project" value="SGD"/>
</dbReference>
<dbReference type="GO" id="GO:0020037">
    <property type="term" value="F:heme binding"/>
    <property type="evidence" value="ECO:0007669"/>
    <property type="project" value="InterPro"/>
</dbReference>
<dbReference type="GO" id="GO:0005506">
    <property type="term" value="F:iron ion binding"/>
    <property type="evidence" value="ECO:0007669"/>
    <property type="project" value="InterPro"/>
</dbReference>
<dbReference type="GO" id="GO:0004497">
    <property type="term" value="F:monooxygenase activity"/>
    <property type="evidence" value="ECO:0007669"/>
    <property type="project" value="UniProtKB-KW"/>
</dbReference>
<dbReference type="GO" id="GO:0003959">
    <property type="term" value="F:NADPH dehydrogenase activity"/>
    <property type="evidence" value="ECO:0000314"/>
    <property type="project" value="SGD"/>
</dbReference>
<dbReference type="GO" id="GO:0016705">
    <property type="term" value="F:oxidoreductase activity, acting on paired donors, with incorporation or reduction of molecular oxygen"/>
    <property type="evidence" value="ECO:0007669"/>
    <property type="project" value="InterPro"/>
</dbReference>
<dbReference type="GO" id="GO:0030476">
    <property type="term" value="P:ascospore wall assembly"/>
    <property type="evidence" value="ECO:0000314"/>
    <property type="project" value="SGD"/>
</dbReference>
<dbReference type="CDD" id="cd11070">
    <property type="entry name" value="CYP56-like"/>
    <property type="match status" value="1"/>
</dbReference>
<dbReference type="FunFam" id="1.10.630.10:FF:000106">
    <property type="entry name" value="Cytochrome P450-DIT2"/>
    <property type="match status" value="1"/>
</dbReference>
<dbReference type="Gene3D" id="1.10.630.10">
    <property type="entry name" value="Cytochrome P450"/>
    <property type="match status" value="1"/>
</dbReference>
<dbReference type="InterPro" id="IPR001128">
    <property type="entry name" value="Cyt_P450"/>
</dbReference>
<dbReference type="InterPro" id="IPR017972">
    <property type="entry name" value="Cyt_P450_CS"/>
</dbReference>
<dbReference type="InterPro" id="IPR002401">
    <property type="entry name" value="Cyt_P450_E_grp-I"/>
</dbReference>
<dbReference type="InterPro" id="IPR036396">
    <property type="entry name" value="Cyt_P450_sf"/>
</dbReference>
<dbReference type="InterPro" id="IPR050121">
    <property type="entry name" value="Cytochrome_P450_monoxygenase"/>
</dbReference>
<dbReference type="PANTHER" id="PTHR24305">
    <property type="entry name" value="CYTOCHROME P450"/>
    <property type="match status" value="1"/>
</dbReference>
<dbReference type="PANTHER" id="PTHR24305:SF223">
    <property type="entry name" value="CYTOCHROME P450-DIT2"/>
    <property type="match status" value="1"/>
</dbReference>
<dbReference type="Pfam" id="PF00067">
    <property type="entry name" value="p450"/>
    <property type="match status" value="1"/>
</dbReference>
<dbReference type="PRINTS" id="PR00463">
    <property type="entry name" value="EP450I"/>
</dbReference>
<dbReference type="PRINTS" id="PR00385">
    <property type="entry name" value="P450"/>
</dbReference>
<dbReference type="SUPFAM" id="SSF48264">
    <property type="entry name" value="Cytochrome P450"/>
    <property type="match status" value="1"/>
</dbReference>
<dbReference type="PROSITE" id="PS00086">
    <property type="entry name" value="CYTOCHROME_P450"/>
    <property type="match status" value="1"/>
</dbReference>
<organism>
    <name type="scientific">Saccharomyces cerevisiae (strain ATCC 204508 / S288c)</name>
    <name type="common">Baker's yeast</name>
    <dbReference type="NCBI Taxonomy" id="559292"/>
    <lineage>
        <taxon>Eukaryota</taxon>
        <taxon>Fungi</taxon>
        <taxon>Dikarya</taxon>
        <taxon>Ascomycota</taxon>
        <taxon>Saccharomycotina</taxon>
        <taxon>Saccharomycetes</taxon>
        <taxon>Saccharomycetales</taxon>
        <taxon>Saccharomycetaceae</taxon>
        <taxon>Saccharomyces</taxon>
    </lineage>
</organism>
<protein>
    <recommendedName>
        <fullName>Cytochrome P450-DIT2</fullName>
        <ecNumber>1.14.14.-</ecNumber>
    </recommendedName>
    <alternativeName>
        <fullName>Cytochrome P450 56</fullName>
    </alternativeName>
</protein>
<gene>
    <name type="primary">DIT2</name>
    <name type="synonym">CYP56</name>
    <name type="ordered locus">YDR402C</name>
    <name type="ORF">D9509.20</name>
</gene>
<keyword id="KW-0349">Heme</keyword>
<keyword id="KW-0408">Iron</keyword>
<keyword id="KW-0479">Metal-binding</keyword>
<keyword id="KW-0503">Monooxygenase</keyword>
<keyword id="KW-0560">Oxidoreductase</keyword>
<keyword id="KW-1185">Reference proteome</keyword>
<keyword id="KW-0749">Sporulation</keyword>
<feature type="chain" id="PRO_0000052042" description="Cytochrome P450-DIT2">
    <location>
        <begin position="1"/>
        <end position="489"/>
    </location>
</feature>
<feature type="binding site" description="axial binding residue" evidence="1">
    <location>
        <position position="435"/>
    </location>
    <ligand>
        <name>heme</name>
        <dbReference type="ChEBI" id="CHEBI:30413"/>
    </ligand>
    <ligandPart>
        <name>Fe</name>
        <dbReference type="ChEBI" id="CHEBI:18248"/>
    </ligandPart>
</feature>
<feature type="sequence conflict" description="In Ref. 1; CAA39246." evidence="2" ref="1">
    <original>M</original>
    <variation>I</variation>
    <location>
        <position position="445"/>
    </location>
</feature>
<accession>P21595</accession>
<accession>D6VT34</accession>
<sequence length="489" mass="56071">MELLKLLCLILFLTLSYVAFAIIVPPLNFPKNIPTIPFYVVFLPVIFPIDQTELYDLYIRESMEKYGAVKFFFGSRWNILVSRSEYLAQIFKDEDTFAKSGNQKKIPYSALAAYTGDNVISAYGAVWRNYRNAVTNGLQHFDDAPIFKNAKILCTLIKNRLLEGQTSIPMGPLSQRMALDNISQVALGFDFGALTHEKNAFHEHLIRIKKQIFHPFFLTFPFLDVLPIPSRKKAFKDVVSFRELLVKRVQDELVNNYKFEQTTFAASDLIRAHNNEIIDYKQLTDNIVIILVAGHENPQLLFNSSLYLLAKYSNEWQEKLRKEVNGITDPKGLADLPLLNAFLFEVVRMYPPLSTIINRCTTKTCKLGAEIVIPKGVYVGYNNFGTSHDPKTWGTTADDFKPERWGSDIETIRKNWRMAKNRCAVTGFHGGRRACLGEKLALTEMRISLAEMLKQFRWSLDPEWEEKLTPAGPLCPLNLKLKFNENIME</sequence>
<evidence type="ECO:0000250" key="1"/>
<evidence type="ECO:0000305" key="2"/>